<organism>
    <name type="scientific">Bacillus subtilis (strain 168)</name>
    <dbReference type="NCBI Taxonomy" id="224308"/>
    <lineage>
        <taxon>Bacteria</taxon>
        <taxon>Bacillati</taxon>
        <taxon>Bacillota</taxon>
        <taxon>Bacilli</taxon>
        <taxon>Bacillales</taxon>
        <taxon>Bacillaceae</taxon>
        <taxon>Bacillus</taxon>
    </lineage>
</organism>
<keyword id="KW-0175">Coiled coil</keyword>
<keyword id="KW-0378">Hydrolase</keyword>
<keyword id="KW-0540">Nuclease</keyword>
<keyword id="KW-1185">Reference proteome</keyword>
<keyword id="KW-0964">Secreted</keyword>
<keyword id="KW-0800">Toxin</keyword>
<comment type="function">
    <text evidence="5">Toxic component of one of 6 LXG toxin-immunity modules in this strain. They promote kin selection, mediate competition in biofilms, and drive spatial segregation of different strains, indicating that LXG toxins may help avoid warfare between strains in biofilms. Mediates intercellular competition during biofilm formation; disruption of the operon disadvantages the bacteria, but overexpression of the cognate immunity protein restores growth in competition with wild-type. Overexpression alone in situ causes growth arrest but not cell lysis, a large decrease in chromosomal DNA content and the production of anucleate cells. No effect is seen on rRNA. Co-overexpression with cognate immunity protein YxxD does not cause growth arrest. The toxic effect is not dependent on the epsA and tapA operons which are required for biofilm formation.</text>
</comment>
<comment type="subunit">
    <text evidence="8">Probably interacts with cognate immunity protein YxxD but not with non-cognate immunity proteins. The interaction inhibits the toxic activity of YxxD (Probable).</text>
</comment>
<comment type="subcellular location">
    <subcellularLocation>
        <location evidence="9">Secreted</location>
    </subcellularLocation>
    <text evidence="5">Delivery to target cells requires the type VII secretion system (T7SS) and YukE.</text>
</comment>
<comment type="induction">
    <text evidence="5">Expressed on rich and minimal solid media likely in early stationary phase; dependent on DegSU. Not expressed in liquid LB, but only under conditions that promote biofilm formation.</text>
</comment>
<comment type="disruption phenotype">
    <text evidence="5">Deletion of the yxiB-yxiC-yxiD-yxxD-yxxE operon has no visible growth phenotype, however it is out-competed by wild-type cells.</text>
</comment>
<comment type="similarity">
    <text evidence="6">In the N-terminal section; belongs to the LXG family.</text>
</comment>
<comment type="caution">
    <text evidence="4">Was originally thought to be an RNase; when the C-terminus (residues 409-569) is expressed in E.coli it has RNase, not DNase activity, and inhibits growth upon expression in E.coli. In vitro RNase activity and in vivo growth inhibition are neutralized by cognate immunity protein YxxD, but not by immunity proteins specific to other toxins with the LXG domain. Mutation of His-548 to Ala leads to loss of growth inhibition and RNase activity in E.coli.</text>
</comment>
<proteinExistence type="evidence at protein level"/>
<protein>
    <recommendedName>
        <fullName evidence="6">Toxin YxiD</fullName>
    </recommendedName>
    <alternativeName>
        <fullName evidence="7">DNase YxiD</fullName>
    </alternativeName>
</protein>
<accession>P42296</accession>
<evidence type="ECO:0000255" key="1"/>
<evidence type="ECO:0000255" key="2">
    <source>
        <dbReference type="PROSITE-ProRule" id="PRU01092"/>
    </source>
</evidence>
<evidence type="ECO:0000256" key="3">
    <source>
        <dbReference type="SAM" id="MobiDB-lite"/>
    </source>
</evidence>
<evidence type="ECO:0000269" key="4">
    <source>
    </source>
</evidence>
<evidence type="ECO:0000269" key="5">
    <source>
    </source>
</evidence>
<evidence type="ECO:0000303" key="6">
    <source>
    </source>
</evidence>
<evidence type="ECO:0000303" key="7">
    <source>
    </source>
</evidence>
<evidence type="ECO:0000305" key="8"/>
<evidence type="ECO:0000305" key="9">
    <source>
    </source>
</evidence>
<dbReference type="EMBL" id="D31856">
    <property type="protein sequence ID" value="BAA06649.1"/>
    <property type="molecule type" value="Genomic_DNA"/>
</dbReference>
<dbReference type="EMBL" id="AL009126">
    <property type="protein sequence ID" value="CAB15966.2"/>
    <property type="molecule type" value="Genomic_DNA"/>
</dbReference>
<dbReference type="PIR" id="H70076">
    <property type="entry name" value="H70076"/>
</dbReference>
<dbReference type="RefSeq" id="WP_003244234.1">
    <property type="nucleotide sequence ID" value="NZ_OZ025638.1"/>
</dbReference>
<dbReference type="SMR" id="P42296"/>
<dbReference type="FunCoup" id="P42296">
    <property type="interactions" value="11"/>
</dbReference>
<dbReference type="STRING" id="224308.BSU39300"/>
<dbReference type="PaxDb" id="224308-BSU39300"/>
<dbReference type="EnsemblBacteria" id="CAB15966">
    <property type="protein sequence ID" value="CAB15966"/>
    <property type="gene ID" value="BSU_39300"/>
</dbReference>
<dbReference type="GeneID" id="937523"/>
<dbReference type="KEGG" id="bsu:BSU39300"/>
<dbReference type="PATRIC" id="fig|224308.179.peg.4254"/>
<dbReference type="eggNOG" id="COG5444">
    <property type="taxonomic scope" value="Bacteria"/>
</dbReference>
<dbReference type="InParanoid" id="P42296"/>
<dbReference type="OrthoDB" id="3261089at2"/>
<dbReference type="BioCyc" id="BSUB:BSU39300-MONOMER"/>
<dbReference type="Proteomes" id="UP000001570">
    <property type="component" value="Chromosome"/>
</dbReference>
<dbReference type="GO" id="GO:0005576">
    <property type="term" value="C:extracellular region"/>
    <property type="evidence" value="ECO:0007669"/>
    <property type="project" value="UniProtKB-SubCell"/>
</dbReference>
<dbReference type="GO" id="GO:0004518">
    <property type="term" value="F:nuclease activity"/>
    <property type="evidence" value="ECO:0007669"/>
    <property type="project" value="UniProtKB-KW"/>
</dbReference>
<dbReference type="GO" id="GO:0090729">
    <property type="term" value="F:toxin activity"/>
    <property type="evidence" value="ECO:0007669"/>
    <property type="project" value="UniProtKB-KW"/>
</dbReference>
<dbReference type="CDD" id="cd00085">
    <property type="entry name" value="HNHc"/>
    <property type="match status" value="1"/>
</dbReference>
<dbReference type="InterPro" id="IPR003615">
    <property type="entry name" value="HNH_nuc"/>
</dbReference>
<dbReference type="InterPro" id="IPR006829">
    <property type="entry name" value="LXG_dom"/>
</dbReference>
<dbReference type="InterPro" id="IPR027797">
    <property type="entry name" value="PT-TG_dom"/>
</dbReference>
<dbReference type="Pfam" id="PF04740">
    <property type="entry name" value="LXG"/>
    <property type="match status" value="1"/>
</dbReference>
<dbReference type="Pfam" id="PF14449">
    <property type="entry name" value="PT-TG"/>
    <property type="match status" value="1"/>
</dbReference>
<dbReference type="PROSITE" id="PS51756">
    <property type="entry name" value="LXG"/>
    <property type="match status" value="1"/>
</dbReference>
<reference key="1">
    <citation type="journal article" date="1995" name="Microbiology">
        <title>Cloning and sequencing of a 29 kb region of the Bacillus subtilis genome containing the hut and wapA loci.</title>
        <authorList>
            <person name="Yoshida K."/>
            <person name="Sano H."/>
            <person name="Seki S."/>
            <person name="Oda M."/>
            <person name="Fujimura M."/>
            <person name="Fujita Y."/>
        </authorList>
    </citation>
    <scope>NUCLEOTIDE SEQUENCE [GENOMIC DNA]</scope>
    <source>
        <strain>168 / BGSC1A1</strain>
    </source>
</reference>
<reference key="2">
    <citation type="journal article" date="1997" name="Nature">
        <title>The complete genome sequence of the Gram-positive bacterium Bacillus subtilis.</title>
        <authorList>
            <person name="Kunst F."/>
            <person name="Ogasawara N."/>
            <person name="Moszer I."/>
            <person name="Albertini A.M."/>
            <person name="Alloni G."/>
            <person name="Azevedo V."/>
            <person name="Bertero M.G."/>
            <person name="Bessieres P."/>
            <person name="Bolotin A."/>
            <person name="Borchert S."/>
            <person name="Borriss R."/>
            <person name="Boursier L."/>
            <person name="Brans A."/>
            <person name="Braun M."/>
            <person name="Brignell S.C."/>
            <person name="Bron S."/>
            <person name="Brouillet S."/>
            <person name="Bruschi C.V."/>
            <person name="Caldwell B."/>
            <person name="Capuano V."/>
            <person name="Carter N.M."/>
            <person name="Choi S.-K."/>
            <person name="Codani J.-J."/>
            <person name="Connerton I.F."/>
            <person name="Cummings N.J."/>
            <person name="Daniel R.A."/>
            <person name="Denizot F."/>
            <person name="Devine K.M."/>
            <person name="Duesterhoeft A."/>
            <person name="Ehrlich S.D."/>
            <person name="Emmerson P.T."/>
            <person name="Entian K.-D."/>
            <person name="Errington J."/>
            <person name="Fabret C."/>
            <person name="Ferrari E."/>
            <person name="Foulger D."/>
            <person name="Fritz C."/>
            <person name="Fujita M."/>
            <person name="Fujita Y."/>
            <person name="Fuma S."/>
            <person name="Galizzi A."/>
            <person name="Galleron N."/>
            <person name="Ghim S.-Y."/>
            <person name="Glaser P."/>
            <person name="Goffeau A."/>
            <person name="Golightly E.J."/>
            <person name="Grandi G."/>
            <person name="Guiseppi G."/>
            <person name="Guy B.J."/>
            <person name="Haga K."/>
            <person name="Haiech J."/>
            <person name="Harwood C.R."/>
            <person name="Henaut A."/>
            <person name="Hilbert H."/>
            <person name="Holsappel S."/>
            <person name="Hosono S."/>
            <person name="Hullo M.-F."/>
            <person name="Itaya M."/>
            <person name="Jones L.-M."/>
            <person name="Joris B."/>
            <person name="Karamata D."/>
            <person name="Kasahara Y."/>
            <person name="Klaerr-Blanchard M."/>
            <person name="Klein C."/>
            <person name="Kobayashi Y."/>
            <person name="Koetter P."/>
            <person name="Koningstein G."/>
            <person name="Krogh S."/>
            <person name="Kumano M."/>
            <person name="Kurita K."/>
            <person name="Lapidus A."/>
            <person name="Lardinois S."/>
            <person name="Lauber J."/>
            <person name="Lazarevic V."/>
            <person name="Lee S.-M."/>
            <person name="Levine A."/>
            <person name="Liu H."/>
            <person name="Masuda S."/>
            <person name="Mauel C."/>
            <person name="Medigue C."/>
            <person name="Medina N."/>
            <person name="Mellado R.P."/>
            <person name="Mizuno M."/>
            <person name="Moestl D."/>
            <person name="Nakai S."/>
            <person name="Noback M."/>
            <person name="Noone D."/>
            <person name="O'Reilly M."/>
            <person name="Ogawa K."/>
            <person name="Ogiwara A."/>
            <person name="Oudega B."/>
            <person name="Park S.-H."/>
            <person name="Parro V."/>
            <person name="Pohl T.M."/>
            <person name="Portetelle D."/>
            <person name="Porwollik S."/>
            <person name="Prescott A.M."/>
            <person name="Presecan E."/>
            <person name="Pujic P."/>
            <person name="Purnelle B."/>
            <person name="Rapoport G."/>
            <person name="Rey M."/>
            <person name="Reynolds S."/>
            <person name="Rieger M."/>
            <person name="Rivolta C."/>
            <person name="Rocha E."/>
            <person name="Roche B."/>
            <person name="Rose M."/>
            <person name="Sadaie Y."/>
            <person name="Sato T."/>
            <person name="Scanlan E."/>
            <person name="Schleich S."/>
            <person name="Schroeter R."/>
            <person name="Scoffone F."/>
            <person name="Sekiguchi J."/>
            <person name="Sekowska A."/>
            <person name="Seror S.J."/>
            <person name="Serror P."/>
            <person name="Shin B.-S."/>
            <person name="Soldo B."/>
            <person name="Sorokin A."/>
            <person name="Tacconi E."/>
            <person name="Takagi T."/>
            <person name="Takahashi H."/>
            <person name="Takemaru K."/>
            <person name="Takeuchi M."/>
            <person name="Tamakoshi A."/>
            <person name="Tanaka T."/>
            <person name="Terpstra P."/>
            <person name="Tognoni A."/>
            <person name="Tosato V."/>
            <person name="Uchiyama S."/>
            <person name="Vandenbol M."/>
            <person name="Vannier F."/>
            <person name="Vassarotti A."/>
            <person name="Viari A."/>
            <person name="Wambutt R."/>
            <person name="Wedler E."/>
            <person name="Wedler H."/>
            <person name="Weitzenegger T."/>
            <person name="Winters P."/>
            <person name="Wipat A."/>
            <person name="Yamamoto H."/>
            <person name="Yamane K."/>
            <person name="Yasumoto K."/>
            <person name="Yata K."/>
            <person name="Yoshida K."/>
            <person name="Yoshikawa H.-F."/>
            <person name="Zumstein E."/>
            <person name="Yoshikawa H."/>
            <person name="Danchin A."/>
        </authorList>
    </citation>
    <scope>NUCLEOTIDE SEQUENCE [LARGE SCALE GENOMIC DNA]</scope>
    <source>
        <strain>168</strain>
    </source>
</reference>
<reference key="3">
    <citation type="journal article" date="2009" name="Microbiology">
        <title>From a consortium sequence to a unified sequence: the Bacillus subtilis 168 reference genome a decade later.</title>
        <authorList>
            <person name="Barbe V."/>
            <person name="Cruveiller S."/>
            <person name="Kunst F."/>
            <person name="Lenoble P."/>
            <person name="Meurice G."/>
            <person name="Sekowska A."/>
            <person name="Vallenet D."/>
            <person name="Wang T."/>
            <person name="Moszer I."/>
            <person name="Medigue C."/>
            <person name="Danchin A."/>
        </authorList>
    </citation>
    <scope>SEQUENCE REVISION TO 176; 287; 397 AND 533</scope>
</reference>
<reference key="4">
    <citation type="journal article" date="2012" name="FEBS Lett.">
        <title>A novel family of toxin/antitoxin proteins in Bacillus species.</title>
        <authorList>
            <person name="Holberger L.E."/>
            <person name="Garza-Sanchez F."/>
            <person name="Lamoureux J."/>
            <person name="Low D.A."/>
            <person name="Hayes C.S."/>
        </authorList>
    </citation>
    <scope>INCORRECT FUNCTION AS AN RNASE</scope>
    <scope>FUNCTION AS A TOXIN</scope>
    <scope>EXPRESSION IN E.COLI</scope>
    <source>
        <strain>168</strain>
    </source>
</reference>
<reference key="5">
    <citation type="journal article" date="2021" name="PLoS Genet.">
        <title>Diverse LXG toxin and antitoxin systems specifically mediate intraspecies competition in Bacillus subtilis biofilms.</title>
        <authorList>
            <person name="Kobayashi K."/>
        </authorList>
    </citation>
    <scope>FUNCTION AS A TOXIN</scope>
    <scope>FUNCTION AS A DNASE</scope>
    <scope>SUBCELLULAR LOCATION</scope>
    <scope>INDUCTION</scope>
    <scope>DISRUPTION PHENOTYPE</scope>
    <source>
        <strain>168 / Marburg / ATCC 6051 / DSM 10 / JCM 1465 / NBRC 13719 / NCIMB 3610 / NRRL NRS-744 / VKM B-501</strain>
    </source>
</reference>
<sequence>MKTLDVHALHEGIQHTIEKLDKQKQQLEKLEKSVEHLAGMKDALKGKGGDAIRTFYEECHKPFLLFFGIFIDEYKKVLKQTQHAISSVESNSHGMIAEAFLSHDARHGVKHAREVTEQLTDAVNRQTSAIDHIVSLPTVNDSFFRMETEQAERLISDTLNKLFQFDGQQTQALEAAKSDFQTMKKYIDQLETMYTGPKIEITGYKSGSILKSQEEENINQIFGAINPQMKQADDSPMEMMLKKLAENEKSKVDSVVKTGDSKKVSKNIIVINGKVYNTSEHREHIKTDFSNAEVKQVVYNDTLYNVYISGNDMKLEPVVSLSDIKVDENGYVKILETAVELTGVYDLFKAATGRDPVSGEKVTGKDRVVASINSVPFAKIAKLEKLIDINKLINNGKKAKKASEVKNVAKDKGKIANDVSGSANKINSDLIKKYARDIEQRTGRELPKNQIDKLKEALRNKEYKKMSPIETAKHRTKFDKVKNKVIKEWEENTGQKWPVYKENVVSEKTGKIIRKKGDKYDAHHIIENTFGGEHEWWNMHPAKFPNEHQAGIHGTGSPANELFKGGKKK</sequence>
<feature type="chain" id="PRO_0000050023" description="Toxin YxiD">
    <location>
        <begin position="1"/>
        <end position="569"/>
    </location>
</feature>
<feature type="domain" description="LXG" evidence="2">
    <location>
        <begin position="1"/>
        <end position="235"/>
    </location>
</feature>
<feature type="region of interest" description="Disordered" evidence="3">
    <location>
        <begin position="548"/>
        <end position="569"/>
    </location>
</feature>
<feature type="coiled-coil region" evidence="1">
    <location>
        <begin position="8"/>
        <end position="91"/>
    </location>
</feature>
<feature type="sequence conflict" description="In Ref. 1; BAA06649." evidence="8" ref="1">
    <original>A</original>
    <variation>G</variation>
    <location>
        <position position="176"/>
    </location>
</feature>
<feature type="sequence conflict" description="In Ref. 1; BAA06649." evidence="8" ref="1">
    <original>T</original>
    <variation>P</variation>
    <location>
        <position position="287"/>
    </location>
</feature>
<feature type="sequence conflict" description="In Ref. 1; BAA06649." evidence="8" ref="1">
    <original>K</original>
    <variation>E</variation>
    <location>
        <position position="397"/>
    </location>
</feature>
<feature type="sequence conflict" description="In Ref. 1; BAA06649." evidence="8" ref="1">
    <original>E</original>
    <variation>K</variation>
    <location>
        <position position="533"/>
    </location>
</feature>
<name>YXID_BACSU</name>
<gene>
    <name type="primary">yxiD</name>
    <name type="synonym">J3D</name>
    <name type="ordered locus">BSU39300</name>
</gene>